<reference key="1">
    <citation type="journal article" date="2009" name="J. Bacteriol.">
        <title>Complete genome sequence of Macrococcus caseolyticus strain JCSCS5402, reflecting the ancestral genome of the human-pathogenic staphylococci.</title>
        <authorList>
            <person name="Baba T."/>
            <person name="Kuwahara-Arai K."/>
            <person name="Uchiyama I."/>
            <person name="Takeuchi F."/>
            <person name="Ito T."/>
            <person name="Hiramatsu K."/>
        </authorList>
    </citation>
    <scope>NUCLEOTIDE SEQUENCE [LARGE SCALE GENOMIC DNA]</scope>
    <source>
        <strain>JCSC5402</strain>
    </source>
</reference>
<organism>
    <name type="scientific">Macrococcus caseolyticus (strain JCSC5402)</name>
    <name type="common">Macrococcoides caseolyticum</name>
    <dbReference type="NCBI Taxonomy" id="458233"/>
    <lineage>
        <taxon>Bacteria</taxon>
        <taxon>Bacillati</taxon>
        <taxon>Bacillota</taxon>
        <taxon>Bacilli</taxon>
        <taxon>Bacillales</taxon>
        <taxon>Staphylococcaceae</taxon>
        <taxon>Macrococcoides</taxon>
    </lineage>
</organism>
<keyword id="KW-1185">Reference proteome</keyword>
<dbReference type="EMBL" id="AP009484">
    <property type="protein sequence ID" value="BAH17429.1"/>
    <property type="molecule type" value="Genomic_DNA"/>
</dbReference>
<dbReference type="RefSeq" id="WP_012656630.1">
    <property type="nucleotide sequence ID" value="NC_011999.1"/>
</dbReference>
<dbReference type="SMR" id="B9EB18"/>
<dbReference type="STRING" id="458233.MCCL_0722"/>
<dbReference type="KEGG" id="mcl:MCCL_0722"/>
<dbReference type="eggNOG" id="COG4493">
    <property type="taxonomic scope" value="Bacteria"/>
</dbReference>
<dbReference type="HOGENOM" id="CLU_096059_0_0_9"/>
<dbReference type="OrthoDB" id="9812818at2"/>
<dbReference type="Proteomes" id="UP000001383">
    <property type="component" value="Chromosome"/>
</dbReference>
<dbReference type="Gene3D" id="3.30.930.20">
    <property type="entry name" value="Protein of unknown function DUF1054"/>
    <property type="match status" value="1"/>
</dbReference>
<dbReference type="HAMAP" id="MF_01851">
    <property type="entry name" value="UPF0637"/>
    <property type="match status" value="1"/>
</dbReference>
<dbReference type="InterPro" id="IPR009403">
    <property type="entry name" value="UPF0637"/>
</dbReference>
<dbReference type="InterPro" id="IPR053707">
    <property type="entry name" value="UPF0637_domain_sf"/>
</dbReference>
<dbReference type="Pfam" id="PF06335">
    <property type="entry name" value="DUF1054"/>
    <property type="match status" value="1"/>
</dbReference>
<dbReference type="PIRSF" id="PIRSF021332">
    <property type="entry name" value="DUF1054"/>
    <property type="match status" value="1"/>
</dbReference>
<dbReference type="SUPFAM" id="SSF142913">
    <property type="entry name" value="YktB/PF0168-like"/>
    <property type="match status" value="1"/>
</dbReference>
<sequence length="203" mass="23838">MTKYHFTSKDFNVFNVEGLEPRMVALIETTRPKLEALGEYFSSYLSQHTDETFYPHVAKHLRRKTNPPNDTWVAFSTNKRGYKMLPHFQIGLFDDHAFVLFGIIYESPEKERMAAKWQQQVNDILALDRDFIIKSDHMKKTYETVHSLDEDALKRYIDRLINVKKGELLFGKVFFPDDAALMSDKKFLAAVEDTFFKLLPLYI</sequence>
<feature type="chain" id="PRO_1000188675" description="UPF0637 protein MCCL_0722">
    <location>
        <begin position="1"/>
        <end position="203"/>
    </location>
</feature>
<gene>
    <name type="ordered locus">MCCL_0722</name>
</gene>
<proteinExistence type="inferred from homology"/>
<comment type="similarity">
    <text evidence="1">Belongs to the UPF0637 family.</text>
</comment>
<name>Y722_MACCJ</name>
<evidence type="ECO:0000255" key="1">
    <source>
        <dbReference type="HAMAP-Rule" id="MF_01851"/>
    </source>
</evidence>
<accession>B9EB18</accession>
<protein>
    <recommendedName>
        <fullName evidence="1">UPF0637 protein MCCL_0722</fullName>
    </recommendedName>
</protein>